<dbReference type="EMBL" id="AY543070">
    <property type="protein sequence ID" value="AAS77172.1"/>
    <property type="molecule type" value="Genomic_DNA"/>
</dbReference>
<dbReference type="EMBL" id="AY692264">
    <property type="protein sequence ID" value="AAU05263.1"/>
    <property type="molecule type" value="Genomic_DNA"/>
</dbReference>
<dbReference type="EMBL" id="AY587007">
    <property type="protein sequence ID" value="AAX12054.1"/>
    <property type="molecule type" value="Genomic_DNA"/>
</dbReference>
<dbReference type="PIR" id="S10131">
    <property type="entry name" value="WBBPT5"/>
</dbReference>
<dbReference type="RefSeq" id="YP_006954.1">
    <property type="nucleotide sequence ID" value="NC_005859.1"/>
</dbReference>
<dbReference type="GeneID" id="2777607"/>
<dbReference type="KEGG" id="vg:2777607"/>
<dbReference type="Proteomes" id="UP000002107">
    <property type="component" value="Genome"/>
</dbReference>
<dbReference type="Proteomes" id="UP000002141">
    <property type="component" value="Segment"/>
</dbReference>
<dbReference type="Proteomes" id="UP000002503">
    <property type="component" value="Segment"/>
</dbReference>
<dbReference type="GO" id="GO:0003677">
    <property type="term" value="F:DNA binding"/>
    <property type="evidence" value="ECO:0007669"/>
    <property type="project" value="UniProtKB-KW"/>
</dbReference>
<dbReference type="GO" id="GO:0006260">
    <property type="term" value="P:DNA replication"/>
    <property type="evidence" value="ECO:0007669"/>
    <property type="project" value="UniProtKB-KW"/>
</dbReference>
<dbReference type="GO" id="GO:0039693">
    <property type="term" value="P:viral DNA genome replication"/>
    <property type="evidence" value="ECO:0007669"/>
    <property type="project" value="UniProtKB-KW"/>
</dbReference>
<keyword id="KW-0235">DNA replication</keyword>
<keyword id="KW-0238">DNA-binding</keyword>
<keyword id="KW-0244">Early protein</keyword>
<keyword id="KW-1185">Reference proteome</keyword>
<keyword id="KW-1194">Viral DNA replication</keyword>
<protein>
    <recommendedName>
        <fullName>Probable ssDNA-binding protein</fullName>
    </recommendedName>
    <alternativeName>
        <fullName>Protein D11</fullName>
    </alternativeName>
</protein>
<feature type="chain" id="PRO_0000165215" description="Probable ssDNA-binding protein">
    <location>
        <begin position="1"/>
        <end position="257"/>
    </location>
</feature>
<feature type="region of interest" description="Disordered" evidence="1">
    <location>
        <begin position="222"/>
        <end position="257"/>
    </location>
</feature>
<feature type="compositionally biased region" description="Basic and acidic residues" evidence="1">
    <location>
        <begin position="225"/>
        <end position="235"/>
    </location>
</feature>
<comment type="function">
    <text evidence="4 5">Required during DNA replication. Displaced viral DNA strands are transiently coated with the ssDNA-binding protein. It is then probably removed by the replisome that performs lagging strand synthesis or during the events that lead up to the recombination process.</text>
</comment>
<comment type="induction">
    <text evidence="2 3">Expressed in the early phase of the viral replicative cycle.</text>
</comment>
<accession>P20376</accession>
<accession>Q66LT9</accession>
<reference key="1">
    <citation type="journal article" date="1988" name="Nucleic Acids Res.">
        <title>The nucleotide sequence of the region of bacteriophage T5 early genes D10-D15.</title>
        <authorList>
            <person name="Kaliman A.V."/>
            <person name="Kryukov V.M."/>
            <person name="Bayev A.A."/>
        </authorList>
    </citation>
    <scope>NUCLEOTIDE SEQUENCE [GENOMIC DNA]</scope>
    <scope>INDUCTION</scope>
</reference>
<reference key="2">
    <citation type="submission" date="2004-01" db="EMBL/GenBank/DDBJ databases">
        <title>Bacteriophage T5 complete genome.</title>
        <authorList>
            <person name="Ksenzenko V.N."/>
            <person name="Kaliman A.V."/>
            <person name="Krutilina A.I."/>
            <person name="Shlyapnikov M.G."/>
        </authorList>
    </citation>
    <scope>NUCLEOTIDE SEQUENCE [LARGE SCALE GENOMIC DNA]</scope>
</reference>
<reference key="3">
    <citation type="journal article" date="2005" name="Virology">
        <title>Complete genome sequence of bacteriophage T5.</title>
        <authorList>
            <person name="Wang J."/>
            <person name="Jiang Y."/>
            <person name="Vincent M."/>
            <person name="Sun Y."/>
            <person name="Yu H."/>
            <person name="Wang J."/>
            <person name="Bao Q."/>
            <person name="Kong H."/>
            <person name="Hu S."/>
        </authorList>
    </citation>
    <scope>NUCLEOTIDE SEQUENCE [LARGE SCALE GENOMIC DNA]</scope>
    <scope>INDUCTION</scope>
    <source>
        <strain evidence="8">ATCC 11303-B5</strain>
    </source>
</reference>
<reference key="4">
    <citation type="journal article" date="2014" name="J. Virol.">
        <title>Insights into bacteriophage T5 structure from analysis of its morphogenesis genes and protein components.</title>
        <authorList>
            <person name="Zivanovic Y."/>
            <person name="Confalonieri F."/>
            <person name="Ponchon L."/>
            <person name="Lurz R."/>
            <person name="Chami M."/>
            <person name="Flayhan A."/>
            <person name="Renouard M."/>
            <person name="Huet A."/>
            <person name="Decottignies P."/>
            <person name="Davidson A.R."/>
            <person name="Breyton C."/>
            <person name="Boulanger P."/>
        </authorList>
    </citation>
    <scope>NUCLEOTIDE SEQUENCE [LARGE SCALE GENOMIC DNA]</scope>
    <source>
        <strain>St0 deletion mutant</strain>
    </source>
</reference>
<reference key="5">
    <citation type="journal article" date="2013" name="J. Mol. Biol.">
        <title>Bacteriophage T5 encodes a homolog of the eukaryotic transcription coactivator PC4 implicated in recombination-dependent DNA replication.</title>
        <authorList>
            <person name="Steigemann B."/>
            <person name="Schulz A."/>
            <person name="Werten S."/>
        </authorList>
    </citation>
    <scope>IDENTIFICATION</scope>
    <scope>PROBABLE FUNCTION</scope>
</reference>
<reference key="6">
    <citation type="journal article" date="2013" name="Bacteriophage">
        <title>Identification of the ssDNA-binding protein of bacteriophage T5: Implications for T5 replication.</title>
        <authorList>
            <person name="Werten S."/>
        </authorList>
    </citation>
    <scope>PROBABLE FUNCTION</scope>
</reference>
<evidence type="ECO:0000256" key="1">
    <source>
        <dbReference type="SAM" id="MobiDB-lite"/>
    </source>
</evidence>
<evidence type="ECO:0000269" key="2">
    <source>
    </source>
</evidence>
<evidence type="ECO:0000305" key="3">
    <source>
    </source>
</evidence>
<evidence type="ECO:0000305" key="4">
    <source>
    </source>
</evidence>
<evidence type="ECO:0000305" key="5">
    <source>
    </source>
</evidence>
<evidence type="ECO:0000312" key="6">
    <source>
        <dbReference type="EMBL" id="AAS77172.1"/>
    </source>
</evidence>
<evidence type="ECO:0000312" key="7">
    <source>
        <dbReference type="EMBL" id="AAU05263.1"/>
    </source>
</evidence>
<evidence type="ECO:0000312" key="8">
    <source>
        <dbReference type="EMBL" id="AAX12054.1"/>
    </source>
</evidence>
<proteinExistence type="evidence at transcript level"/>
<organism>
    <name type="scientific">Escherichia phage T5</name>
    <name type="common">Enterobacteria phage T5</name>
    <dbReference type="NCBI Taxonomy" id="2695836"/>
    <lineage>
        <taxon>Viruses</taxon>
        <taxon>Duplodnaviria</taxon>
        <taxon>Heunggongvirae</taxon>
        <taxon>Uroviricota</taxon>
        <taxon>Caudoviricetes</taxon>
        <taxon>Demerecviridae</taxon>
        <taxon>Markadamsvirinae</taxon>
        <taxon>Tequintavirus</taxon>
        <taxon>Tequintavirus T5</taxon>
    </lineage>
</organism>
<name>SSDNA_BPT5</name>
<organismHost>
    <name type="scientific">Escherichia coli</name>
    <dbReference type="NCBI Taxonomy" id="562"/>
</organismHost>
<sequence>MAKSWGETTGGSNDKIEFLKFNNGITRVRIVSGVLPRYVYWLTNKEGSVAPFECLRFNRDKESFVRGKADPVHELGFFEKELDKDGNRVPLKPKKNYIAFVIDRSDNKLKVMEVKATILKGIQSIMKQLNLATPFDIDISIEKKGKGFDTEYDVQQIAAMQFQIKLQDPNSAESKQYAADVDLIGEAMCDEDGDIIKFEKVPSLEQTYPVPTYEEQKEAIQAFMEGRENKDDDAKSGNSNAGSQKGIDQEAASDLDD</sequence>
<gene>
    <name type="primary">D11</name>
    <name evidence="6" type="ORF">T5.126</name>
    <name evidence="7" type="ORF">T5p124</name>
</gene>